<accession>Q06GT9</accession>
<feature type="chain" id="PRO_0000276972" description="Small ribosomal subunit protein uS15c">
    <location>
        <begin position="1"/>
        <end position="90"/>
    </location>
</feature>
<keyword id="KW-0150">Chloroplast</keyword>
<keyword id="KW-0934">Plastid</keyword>
<keyword id="KW-0687">Ribonucleoprotein</keyword>
<keyword id="KW-0689">Ribosomal protein</keyword>
<proteinExistence type="inferred from homology"/>
<gene>
    <name type="primary">rps15</name>
</gene>
<evidence type="ECO:0000250" key="1"/>
<evidence type="ECO:0000305" key="2"/>
<protein>
    <recommendedName>
        <fullName evidence="2">Small ribosomal subunit protein uS15c</fullName>
    </recommendedName>
    <alternativeName>
        <fullName>30S ribosomal protein S15, chloroplastic</fullName>
    </alternativeName>
</protein>
<name>RR15_DRIGR</name>
<organism>
    <name type="scientific">Drimys granadensis</name>
    <dbReference type="NCBI Taxonomy" id="224735"/>
    <lineage>
        <taxon>Eukaryota</taxon>
        <taxon>Viridiplantae</taxon>
        <taxon>Streptophyta</taxon>
        <taxon>Embryophyta</taxon>
        <taxon>Tracheophyta</taxon>
        <taxon>Spermatophyta</taxon>
        <taxon>Magnoliopsida</taxon>
        <taxon>Magnoliidae</taxon>
        <taxon>Canellales</taxon>
        <taxon>Winteraceae</taxon>
        <taxon>Drimys</taxon>
    </lineage>
</organism>
<reference key="1">
    <citation type="journal article" date="2006" name="BMC Evol. Biol.">
        <title>Complete plastid genome sequences of Drimys, Liriodendron, and Piper: implications for the phylogenetic relationships of magnoliids.</title>
        <authorList>
            <person name="Cai Z."/>
            <person name="Penaflor C."/>
            <person name="Kuehl J.V."/>
            <person name="Leebens-Mack J."/>
            <person name="Carlson J.E."/>
            <person name="dePamphilis C.W."/>
            <person name="Boore J.L."/>
            <person name="Jansen R.K."/>
        </authorList>
    </citation>
    <scope>NUCLEOTIDE SEQUENCE [LARGE SCALE GENOMIC DNA]</scope>
</reference>
<dbReference type="EMBL" id="DQ887676">
    <property type="protein sequence ID" value="ABH88355.1"/>
    <property type="molecule type" value="Genomic_DNA"/>
</dbReference>
<dbReference type="RefSeq" id="YP_784444.1">
    <property type="nucleotide sequence ID" value="NC_008456.1"/>
</dbReference>
<dbReference type="SMR" id="Q06GT9"/>
<dbReference type="GeneID" id="4363565"/>
<dbReference type="GO" id="GO:0009507">
    <property type="term" value="C:chloroplast"/>
    <property type="evidence" value="ECO:0007669"/>
    <property type="project" value="UniProtKB-SubCell"/>
</dbReference>
<dbReference type="GO" id="GO:1990904">
    <property type="term" value="C:ribonucleoprotein complex"/>
    <property type="evidence" value="ECO:0007669"/>
    <property type="project" value="UniProtKB-KW"/>
</dbReference>
<dbReference type="GO" id="GO:0005840">
    <property type="term" value="C:ribosome"/>
    <property type="evidence" value="ECO:0007669"/>
    <property type="project" value="UniProtKB-KW"/>
</dbReference>
<dbReference type="GO" id="GO:0003735">
    <property type="term" value="F:structural constituent of ribosome"/>
    <property type="evidence" value="ECO:0007669"/>
    <property type="project" value="InterPro"/>
</dbReference>
<dbReference type="GO" id="GO:0006412">
    <property type="term" value="P:translation"/>
    <property type="evidence" value="ECO:0007669"/>
    <property type="project" value="UniProtKB-UniRule"/>
</dbReference>
<dbReference type="CDD" id="cd00353">
    <property type="entry name" value="Ribosomal_S15p_S13e"/>
    <property type="match status" value="1"/>
</dbReference>
<dbReference type="Gene3D" id="1.10.287.10">
    <property type="entry name" value="S15/NS1, RNA-binding"/>
    <property type="match status" value="1"/>
</dbReference>
<dbReference type="HAMAP" id="MF_01343_B">
    <property type="entry name" value="Ribosomal_uS15_B"/>
    <property type="match status" value="1"/>
</dbReference>
<dbReference type="InterPro" id="IPR000589">
    <property type="entry name" value="Ribosomal_uS15"/>
</dbReference>
<dbReference type="InterPro" id="IPR005290">
    <property type="entry name" value="Ribosomal_uS15_bac-type"/>
</dbReference>
<dbReference type="InterPro" id="IPR009068">
    <property type="entry name" value="uS15_NS1_RNA-bd_sf"/>
</dbReference>
<dbReference type="NCBIfam" id="TIGR00952">
    <property type="entry name" value="S15_bact"/>
    <property type="match status" value="1"/>
</dbReference>
<dbReference type="PANTHER" id="PTHR23321">
    <property type="entry name" value="RIBOSOMAL PROTEIN S15, BACTERIAL AND ORGANELLAR"/>
    <property type="match status" value="1"/>
</dbReference>
<dbReference type="PANTHER" id="PTHR23321:SF26">
    <property type="entry name" value="SMALL RIBOSOMAL SUBUNIT PROTEIN US15M"/>
    <property type="match status" value="1"/>
</dbReference>
<dbReference type="Pfam" id="PF00312">
    <property type="entry name" value="Ribosomal_S15"/>
    <property type="match status" value="1"/>
</dbReference>
<dbReference type="SMART" id="SM01387">
    <property type="entry name" value="Ribosomal_S15"/>
    <property type="match status" value="1"/>
</dbReference>
<dbReference type="SUPFAM" id="SSF47060">
    <property type="entry name" value="S15/NS1 RNA-binding domain"/>
    <property type="match status" value="1"/>
</dbReference>
<dbReference type="PROSITE" id="PS00362">
    <property type="entry name" value="RIBOSOMAL_S15"/>
    <property type="match status" value="1"/>
</dbReference>
<comment type="subunit">
    <text evidence="1">Part of the 30S ribosomal subunit.</text>
</comment>
<comment type="subcellular location">
    <subcellularLocation>
        <location>Plastid</location>
        <location>Chloroplast</location>
    </subcellularLocation>
</comment>
<comment type="similarity">
    <text evidence="2">Belongs to the universal ribosomal protein uS15 family.</text>
</comment>
<geneLocation type="chloroplast"/>
<sequence>MVKNLFISVIPQEEKEKNKGSVEFQVFNFTNKIRRLTAHLEFHRKDYLSQRGLRKILGKRQRLLAYLSKKNRVRYKELIGQLDIREPKTR</sequence>